<gene>
    <name evidence="1" type="primary">eno</name>
    <name type="ordered locus">WIGBR3530</name>
</gene>
<name>ENO_WIGBR</name>
<sequence length="443" mass="49004">MSKIIKVIGREIIDSRGYPTVEAEVHLLGGIIGRASSPSGISIGSREAHEVRDRDNSRFLGEGVTKAVKSINNKISKSLISKNAQKQKDIDQIMINLDGTKNKSNLGANAILAVSLANAKAASKIKNIPLYKHISEINNTPGIFSMPLPMINIINGGKHTNNNIDIQEFMIQPIGAKSIKQAIQMGSEIFHNLGKILNEKGMSTSIGDEGGYSPNLKSNSNAFVLIKEAVKRSKYHIGRDITFAIDCAASEFFEESTQSYYLKSENNFFSSYEFVLFLKKLTEEYPILSIEDGLHENDWEGFSMLTNYLGNKIQLVGDDLFTTNPKFLKYGIKKGIANSILIKPNQIGSLTETLEVIKIAKKYGYATIISHRSGETEDVTIADLSVGTSSGQIKTGSMSRSDRTAKYNRLIRIEEELGSNAIFHGKMEIKNQFIYSNNNLKNF</sequence>
<keyword id="KW-0963">Cytoplasm</keyword>
<keyword id="KW-0324">Glycolysis</keyword>
<keyword id="KW-0456">Lyase</keyword>
<keyword id="KW-0460">Magnesium</keyword>
<keyword id="KW-0479">Metal-binding</keyword>
<keyword id="KW-1185">Reference proteome</keyword>
<keyword id="KW-0964">Secreted</keyword>
<protein>
    <recommendedName>
        <fullName evidence="1">Enolase</fullName>
        <ecNumber evidence="1">4.2.1.11</ecNumber>
    </recommendedName>
    <alternativeName>
        <fullName evidence="1">2-phospho-D-glycerate hydro-lyase</fullName>
    </alternativeName>
    <alternativeName>
        <fullName evidence="1">2-phosphoglycerate dehydratase</fullName>
    </alternativeName>
</protein>
<reference key="1">
    <citation type="journal article" date="2002" name="Nat. Genet.">
        <title>Genome sequence of the endocellular obligate symbiont of tsetse flies, Wigglesworthia glossinidia.</title>
        <authorList>
            <person name="Akman L."/>
            <person name="Yamashita A."/>
            <person name="Watanabe H."/>
            <person name="Oshima K."/>
            <person name="Shiba T."/>
            <person name="Hattori M."/>
            <person name="Aksoy S."/>
        </authorList>
    </citation>
    <scope>NUCLEOTIDE SEQUENCE [LARGE SCALE GENOMIC DNA]</scope>
</reference>
<comment type="function">
    <text evidence="1">Catalyzes the reversible conversion of 2-phosphoglycerate (2-PG) into phosphoenolpyruvate (PEP). It is essential for the degradation of carbohydrates via glycolysis.</text>
</comment>
<comment type="catalytic activity">
    <reaction evidence="1">
        <text>(2R)-2-phosphoglycerate = phosphoenolpyruvate + H2O</text>
        <dbReference type="Rhea" id="RHEA:10164"/>
        <dbReference type="ChEBI" id="CHEBI:15377"/>
        <dbReference type="ChEBI" id="CHEBI:58289"/>
        <dbReference type="ChEBI" id="CHEBI:58702"/>
        <dbReference type="EC" id="4.2.1.11"/>
    </reaction>
</comment>
<comment type="cofactor">
    <cofactor evidence="1">
        <name>Mg(2+)</name>
        <dbReference type="ChEBI" id="CHEBI:18420"/>
    </cofactor>
    <text evidence="1">Binds a second Mg(2+) ion via substrate during catalysis.</text>
</comment>
<comment type="pathway">
    <text evidence="1">Carbohydrate degradation; glycolysis; pyruvate from D-glyceraldehyde 3-phosphate: step 4/5.</text>
</comment>
<comment type="subunit">
    <text evidence="1">Component of the RNA degradosome, a multiprotein complex involved in RNA processing and mRNA degradation.</text>
</comment>
<comment type="subcellular location">
    <subcellularLocation>
        <location evidence="1">Cytoplasm</location>
    </subcellularLocation>
    <subcellularLocation>
        <location evidence="1">Secreted</location>
    </subcellularLocation>
    <subcellularLocation>
        <location evidence="1">Cell surface</location>
    </subcellularLocation>
    <text evidence="1">Fractions of enolase are present in both the cytoplasm and on the cell surface.</text>
</comment>
<comment type="similarity">
    <text evidence="1">Belongs to the enolase family.</text>
</comment>
<proteinExistence type="inferred from homology"/>
<accession>Q8D2K1</accession>
<organism>
    <name type="scientific">Wigglesworthia glossinidia brevipalpis</name>
    <dbReference type="NCBI Taxonomy" id="36870"/>
    <lineage>
        <taxon>Bacteria</taxon>
        <taxon>Pseudomonadati</taxon>
        <taxon>Pseudomonadota</taxon>
        <taxon>Gammaproteobacteria</taxon>
        <taxon>Enterobacterales</taxon>
        <taxon>Erwiniaceae</taxon>
        <taxon>Wigglesworthia</taxon>
    </lineage>
</organism>
<feature type="chain" id="PRO_0000134008" description="Enolase">
    <location>
        <begin position="1"/>
        <end position="443"/>
    </location>
</feature>
<feature type="active site" description="Proton donor" evidence="1">
    <location>
        <position position="209"/>
    </location>
</feature>
<feature type="active site" description="Proton acceptor" evidence="1">
    <location>
        <position position="343"/>
    </location>
</feature>
<feature type="binding site" evidence="1">
    <location>
        <position position="167"/>
    </location>
    <ligand>
        <name>(2R)-2-phosphoglycerate</name>
        <dbReference type="ChEBI" id="CHEBI:58289"/>
    </ligand>
</feature>
<feature type="binding site" evidence="1">
    <location>
        <position position="246"/>
    </location>
    <ligand>
        <name>Mg(2+)</name>
        <dbReference type="ChEBI" id="CHEBI:18420"/>
    </ligand>
</feature>
<feature type="binding site" evidence="1">
    <location>
        <position position="291"/>
    </location>
    <ligand>
        <name>Mg(2+)</name>
        <dbReference type="ChEBI" id="CHEBI:18420"/>
    </ligand>
</feature>
<feature type="binding site" evidence="1">
    <location>
        <position position="318"/>
    </location>
    <ligand>
        <name>Mg(2+)</name>
        <dbReference type="ChEBI" id="CHEBI:18420"/>
    </ligand>
</feature>
<feature type="binding site" evidence="1">
    <location>
        <position position="343"/>
    </location>
    <ligand>
        <name>(2R)-2-phosphoglycerate</name>
        <dbReference type="ChEBI" id="CHEBI:58289"/>
    </ligand>
</feature>
<feature type="binding site" evidence="1">
    <location>
        <position position="372"/>
    </location>
    <ligand>
        <name>(2R)-2-phosphoglycerate</name>
        <dbReference type="ChEBI" id="CHEBI:58289"/>
    </ligand>
</feature>
<feature type="binding site" evidence="1">
    <location>
        <position position="373"/>
    </location>
    <ligand>
        <name>(2R)-2-phosphoglycerate</name>
        <dbReference type="ChEBI" id="CHEBI:58289"/>
    </ligand>
</feature>
<feature type="binding site" evidence="1">
    <location>
        <position position="394"/>
    </location>
    <ligand>
        <name>(2R)-2-phosphoglycerate</name>
        <dbReference type="ChEBI" id="CHEBI:58289"/>
    </ligand>
</feature>
<dbReference type="EC" id="4.2.1.11" evidence="1"/>
<dbReference type="EMBL" id="BA000021">
    <property type="protein sequence ID" value="BAC24499.1"/>
    <property type="molecule type" value="Genomic_DNA"/>
</dbReference>
<dbReference type="SMR" id="Q8D2K1"/>
<dbReference type="STRING" id="36870.gene:10368853"/>
<dbReference type="KEGG" id="wbr:eno"/>
<dbReference type="eggNOG" id="COG0148">
    <property type="taxonomic scope" value="Bacteria"/>
</dbReference>
<dbReference type="HOGENOM" id="CLU_031223_2_1_6"/>
<dbReference type="OrthoDB" id="9804716at2"/>
<dbReference type="UniPathway" id="UPA00109">
    <property type="reaction ID" value="UER00187"/>
</dbReference>
<dbReference type="Proteomes" id="UP000000562">
    <property type="component" value="Chromosome"/>
</dbReference>
<dbReference type="GO" id="GO:0009986">
    <property type="term" value="C:cell surface"/>
    <property type="evidence" value="ECO:0007669"/>
    <property type="project" value="UniProtKB-SubCell"/>
</dbReference>
<dbReference type="GO" id="GO:0005576">
    <property type="term" value="C:extracellular region"/>
    <property type="evidence" value="ECO:0007669"/>
    <property type="project" value="UniProtKB-SubCell"/>
</dbReference>
<dbReference type="GO" id="GO:0000015">
    <property type="term" value="C:phosphopyruvate hydratase complex"/>
    <property type="evidence" value="ECO:0007669"/>
    <property type="project" value="InterPro"/>
</dbReference>
<dbReference type="GO" id="GO:0000287">
    <property type="term" value="F:magnesium ion binding"/>
    <property type="evidence" value="ECO:0007669"/>
    <property type="project" value="UniProtKB-UniRule"/>
</dbReference>
<dbReference type="GO" id="GO:0004634">
    <property type="term" value="F:phosphopyruvate hydratase activity"/>
    <property type="evidence" value="ECO:0007669"/>
    <property type="project" value="UniProtKB-UniRule"/>
</dbReference>
<dbReference type="GO" id="GO:0006096">
    <property type="term" value="P:glycolytic process"/>
    <property type="evidence" value="ECO:0007669"/>
    <property type="project" value="UniProtKB-UniRule"/>
</dbReference>
<dbReference type="CDD" id="cd03313">
    <property type="entry name" value="enolase"/>
    <property type="match status" value="1"/>
</dbReference>
<dbReference type="FunFam" id="3.30.390.10:FF:000001">
    <property type="entry name" value="Enolase"/>
    <property type="match status" value="1"/>
</dbReference>
<dbReference type="Gene3D" id="3.20.20.120">
    <property type="entry name" value="Enolase-like C-terminal domain"/>
    <property type="match status" value="1"/>
</dbReference>
<dbReference type="Gene3D" id="3.30.390.10">
    <property type="entry name" value="Enolase-like, N-terminal domain"/>
    <property type="match status" value="1"/>
</dbReference>
<dbReference type="HAMAP" id="MF_00318">
    <property type="entry name" value="Enolase"/>
    <property type="match status" value="1"/>
</dbReference>
<dbReference type="InterPro" id="IPR000941">
    <property type="entry name" value="Enolase"/>
</dbReference>
<dbReference type="InterPro" id="IPR036849">
    <property type="entry name" value="Enolase-like_C_sf"/>
</dbReference>
<dbReference type="InterPro" id="IPR029017">
    <property type="entry name" value="Enolase-like_N"/>
</dbReference>
<dbReference type="InterPro" id="IPR020810">
    <property type="entry name" value="Enolase_C"/>
</dbReference>
<dbReference type="InterPro" id="IPR020809">
    <property type="entry name" value="Enolase_CS"/>
</dbReference>
<dbReference type="InterPro" id="IPR020811">
    <property type="entry name" value="Enolase_N"/>
</dbReference>
<dbReference type="NCBIfam" id="TIGR01060">
    <property type="entry name" value="eno"/>
    <property type="match status" value="1"/>
</dbReference>
<dbReference type="PANTHER" id="PTHR11902">
    <property type="entry name" value="ENOLASE"/>
    <property type="match status" value="1"/>
</dbReference>
<dbReference type="PANTHER" id="PTHR11902:SF1">
    <property type="entry name" value="ENOLASE"/>
    <property type="match status" value="1"/>
</dbReference>
<dbReference type="Pfam" id="PF00113">
    <property type="entry name" value="Enolase_C"/>
    <property type="match status" value="1"/>
</dbReference>
<dbReference type="Pfam" id="PF03952">
    <property type="entry name" value="Enolase_N"/>
    <property type="match status" value="1"/>
</dbReference>
<dbReference type="PIRSF" id="PIRSF001400">
    <property type="entry name" value="Enolase"/>
    <property type="match status" value="1"/>
</dbReference>
<dbReference type="PRINTS" id="PR00148">
    <property type="entry name" value="ENOLASE"/>
</dbReference>
<dbReference type="SFLD" id="SFLDF00002">
    <property type="entry name" value="enolase"/>
    <property type="match status" value="1"/>
</dbReference>
<dbReference type="SFLD" id="SFLDG00178">
    <property type="entry name" value="enolase"/>
    <property type="match status" value="1"/>
</dbReference>
<dbReference type="SMART" id="SM01192">
    <property type="entry name" value="Enolase_C"/>
    <property type="match status" value="1"/>
</dbReference>
<dbReference type="SMART" id="SM01193">
    <property type="entry name" value="Enolase_N"/>
    <property type="match status" value="1"/>
</dbReference>
<dbReference type="SUPFAM" id="SSF51604">
    <property type="entry name" value="Enolase C-terminal domain-like"/>
    <property type="match status" value="1"/>
</dbReference>
<dbReference type="SUPFAM" id="SSF54826">
    <property type="entry name" value="Enolase N-terminal domain-like"/>
    <property type="match status" value="1"/>
</dbReference>
<dbReference type="PROSITE" id="PS00164">
    <property type="entry name" value="ENOLASE"/>
    <property type="match status" value="1"/>
</dbReference>
<evidence type="ECO:0000255" key="1">
    <source>
        <dbReference type="HAMAP-Rule" id="MF_00318"/>
    </source>
</evidence>